<name>CLPX_RICPR</name>
<organism>
    <name type="scientific">Rickettsia prowazekii (strain Madrid E)</name>
    <dbReference type="NCBI Taxonomy" id="272947"/>
    <lineage>
        <taxon>Bacteria</taxon>
        <taxon>Pseudomonadati</taxon>
        <taxon>Pseudomonadota</taxon>
        <taxon>Alphaproteobacteria</taxon>
        <taxon>Rickettsiales</taxon>
        <taxon>Rickettsiaceae</taxon>
        <taxon>Rickettsieae</taxon>
        <taxon>Rickettsia</taxon>
        <taxon>typhus group</taxon>
    </lineage>
</organism>
<proteinExistence type="inferred from homology"/>
<gene>
    <name evidence="1" type="primary">clpX</name>
    <name type="ordered locus">RP692</name>
</gene>
<sequence>MVVDADKKELICSFCSKKQHEVKKLIAGPAVFICDECIDLCTDIMKEESKVALKQITASIPTPQKICKILNDYVVGQDQAKKILAVAVYNHYKRLEYVQSGNNDVELNKSNILLIGPTGSGKTLLAQTLAKILDVPFTMADATSLTEAGYVGEDVENILLRLLISAEFNIAKAQKGIIYIDEVDKIARKSDNPSITRDVSGEGVQQALLKIMEGTVASVPPQGGRKHPQQDFVQLDTSNILFICGGAFMGIDRIIRSRTNHSSIGFAANINIDKEKSNNEILKSLEIEDLTKFGLIPEFIGRLPIITTLDELDKEALITILTKPKNAIVKQYQKQFELDDADLVIDYSALEAIAEKALVKKTGARGLRSILEHLLLDSMYKVAELKKQRVTITKEVVDGLIEPCMTSIISTKLNKKQPIIEDIPA</sequence>
<keyword id="KW-0067">ATP-binding</keyword>
<keyword id="KW-0143">Chaperone</keyword>
<keyword id="KW-0479">Metal-binding</keyword>
<keyword id="KW-0547">Nucleotide-binding</keyword>
<keyword id="KW-1185">Reference proteome</keyword>
<keyword id="KW-0862">Zinc</keyword>
<protein>
    <recommendedName>
        <fullName evidence="1">ATP-dependent Clp protease ATP-binding subunit ClpX</fullName>
    </recommendedName>
</protein>
<comment type="function">
    <text evidence="1">ATP-dependent specificity component of the Clp protease. It directs the protease to specific substrates. Can perform chaperone functions in the absence of ClpP.</text>
</comment>
<comment type="subunit">
    <text evidence="1">Component of the ClpX-ClpP complex. Forms a hexameric ring that, in the presence of ATP, binds to fourteen ClpP subunits assembled into a disk-like structure with a central cavity, resembling the structure of eukaryotic proteasomes.</text>
</comment>
<comment type="similarity">
    <text evidence="1">Belongs to the ClpX chaperone family.</text>
</comment>
<feature type="chain" id="PRO_0000160413" description="ATP-dependent Clp protease ATP-binding subunit ClpX">
    <location>
        <begin position="1"/>
        <end position="425"/>
    </location>
</feature>
<feature type="domain" description="ClpX-type ZB" evidence="2">
    <location>
        <begin position="1"/>
        <end position="53"/>
    </location>
</feature>
<feature type="binding site" evidence="2">
    <location>
        <position position="12"/>
    </location>
    <ligand>
        <name>Zn(2+)</name>
        <dbReference type="ChEBI" id="CHEBI:29105"/>
    </ligand>
</feature>
<feature type="binding site" evidence="2">
    <location>
        <position position="15"/>
    </location>
    <ligand>
        <name>Zn(2+)</name>
        <dbReference type="ChEBI" id="CHEBI:29105"/>
    </ligand>
</feature>
<feature type="binding site" evidence="2">
    <location>
        <position position="34"/>
    </location>
    <ligand>
        <name>Zn(2+)</name>
        <dbReference type="ChEBI" id="CHEBI:29105"/>
    </ligand>
</feature>
<feature type="binding site" evidence="2">
    <location>
        <position position="37"/>
    </location>
    <ligand>
        <name>Zn(2+)</name>
        <dbReference type="ChEBI" id="CHEBI:29105"/>
    </ligand>
</feature>
<feature type="binding site" evidence="1">
    <location>
        <begin position="117"/>
        <end position="124"/>
    </location>
    <ligand>
        <name>ATP</name>
        <dbReference type="ChEBI" id="CHEBI:30616"/>
    </ligand>
</feature>
<accession>Q9ZCN1</accession>
<evidence type="ECO:0000255" key="1">
    <source>
        <dbReference type="HAMAP-Rule" id="MF_00175"/>
    </source>
</evidence>
<evidence type="ECO:0000255" key="2">
    <source>
        <dbReference type="PROSITE-ProRule" id="PRU01250"/>
    </source>
</evidence>
<dbReference type="EMBL" id="AJ235272">
    <property type="protein sequence ID" value="CAA15129.1"/>
    <property type="molecule type" value="Genomic_DNA"/>
</dbReference>
<dbReference type="PIR" id="G71675">
    <property type="entry name" value="G71675"/>
</dbReference>
<dbReference type="RefSeq" id="NP_221053.1">
    <property type="nucleotide sequence ID" value="NC_000963.1"/>
</dbReference>
<dbReference type="RefSeq" id="WP_004598091.1">
    <property type="nucleotide sequence ID" value="NC_000963.1"/>
</dbReference>
<dbReference type="SMR" id="Q9ZCN1"/>
<dbReference type="STRING" id="272947.gene:17555769"/>
<dbReference type="EnsemblBacteria" id="CAA15129">
    <property type="protein sequence ID" value="CAA15129"/>
    <property type="gene ID" value="CAA15129"/>
</dbReference>
<dbReference type="GeneID" id="57569817"/>
<dbReference type="KEGG" id="rpr:RP692"/>
<dbReference type="PATRIC" id="fig|272947.5.peg.714"/>
<dbReference type="eggNOG" id="COG1219">
    <property type="taxonomic scope" value="Bacteria"/>
</dbReference>
<dbReference type="HOGENOM" id="CLU_014218_8_2_5"/>
<dbReference type="OrthoDB" id="9804062at2"/>
<dbReference type="Proteomes" id="UP000002480">
    <property type="component" value="Chromosome"/>
</dbReference>
<dbReference type="GO" id="GO:0009376">
    <property type="term" value="C:HslUV protease complex"/>
    <property type="evidence" value="ECO:0007669"/>
    <property type="project" value="TreeGrafter"/>
</dbReference>
<dbReference type="GO" id="GO:0005524">
    <property type="term" value="F:ATP binding"/>
    <property type="evidence" value="ECO:0007669"/>
    <property type="project" value="UniProtKB-UniRule"/>
</dbReference>
<dbReference type="GO" id="GO:0016887">
    <property type="term" value="F:ATP hydrolysis activity"/>
    <property type="evidence" value="ECO:0007669"/>
    <property type="project" value="InterPro"/>
</dbReference>
<dbReference type="GO" id="GO:0140662">
    <property type="term" value="F:ATP-dependent protein folding chaperone"/>
    <property type="evidence" value="ECO:0007669"/>
    <property type="project" value="InterPro"/>
</dbReference>
<dbReference type="GO" id="GO:0046983">
    <property type="term" value="F:protein dimerization activity"/>
    <property type="evidence" value="ECO:0007669"/>
    <property type="project" value="InterPro"/>
</dbReference>
<dbReference type="GO" id="GO:0051082">
    <property type="term" value="F:unfolded protein binding"/>
    <property type="evidence" value="ECO:0007669"/>
    <property type="project" value="UniProtKB-UniRule"/>
</dbReference>
<dbReference type="GO" id="GO:0008270">
    <property type="term" value="F:zinc ion binding"/>
    <property type="evidence" value="ECO:0007669"/>
    <property type="project" value="InterPro"/>
</dbReference>
<dbReference type="GO" id="GO:0051301">
    <property type="term" value="P:cell division"/>
    <property type="evidence" value="ECO:0007669"/>
    <property type="project" value="TreeGrafter"/>
</dbReference>
<dbReference type="GO" id="GO:0051603">
    <property type="term" value="P:proteolysis involved in protein catabolic process"/>
    <property type="evidence" value="ECO:0007669"/>
    <property type="project" value="TreeGrafter"/>
</dbReference>
<dbReference type="CDD" id="cd19497">
    <property type="entry name" value="RecA-like_ClpX"/>
    <property type="match status" value="1"/>
</dbReference>
<dbReference type="FunFam" id="1.10.8.60:FF:000002">
    <property type="entry name" value="ATP-dependent Clp protease ATP-binding subunit ClpX"/>
    <property type="match status" value="1"/>
</dbReference>
<dbReference type="FunFam" id="3.40.50.300:FF:000005">
    <property type="entry name" value="ATP-dependent Clp protease ATP-binding subunit ClpX"/>
    <property type="match status" value="1"/>
</dbReference>
<dbReference type="Gene3D" id="1.10.8.60">
    <property type="match status" value="1"/>
</dbReference>
<dbReference type="Gene3D" id="6.20.220.10">
    <property type="entry name" value="ClpX chaperone, C4-type zinc finger domain"/>
    <property type="match status" value="1"/>
</dbReference>
<dbReference type="Gene3D" id="3.40.50.300">
    <property type="entry name" value="P-loop containing nucleotide triphosphate hydrolases"/>
    <property type="match status" value="1"/>
</dbReference>
<dbReference type="HAMAP" id="MF_00175">
    <property type="entry name" value="ClpX"/>
    <property type="match status" value="1"/>
</dbReference>
<dbReference type="InterPro" id="IPR003593">
    <property type="entry name" value="AAA+_ATPase"/>
</dbReference>
<dbReference type="InterPro" id="IPR050052">
    <property type="entry name" value="ATP-dep_Clp_protease_ClpX"/>
</dbReference>
<dbReference type="InterPro" id="IPR003959">
    <property type="entry name" value="ATPase_AAA_core"/>
</dbReference>
<dbReference type="InterPro" id="IPR019489">
    <property type="entry name" value="Clp_ATPase_C"/>
</dbReference>
<dbReference type="InterPro" id="IPR004487">
    <property type="entry name" value="Clp_protease_ATP-bd_su_ClpX"/>
</dbReference>
<dbReference type="InterPro" id="IPR046425">
    <property type="entry name" value="ClpX_bact"/>
</dbReference>
<dbReference type="InterPro" id="IPR027417">
    <property type="entry name" value="P-loop_NTPase"/>
</dbReference>
<dbReference type="InterPro" id="IPR010603">
    <property type="entry name" value="Znf_CppX_C4"/>
</dbReference>
<dbReference type="InterPro" id="IPR038366">
    <property type="entry name" value="Znf_CppX_C4_sf"/>
</dbReference>
<dbReference type="NCBIfam" id="TIGR00382">
    <property type="entry name" value="clpX"/>
    <property type="match status" value="1"/>
</dbReference>
<dbReference type="NCBIfam" id="NF003745">
    <property type="entry name" value="PRK05342.1"/>
    <property type="match status" value="1"/>
</dbReference>
<dbReference type="PANTHER" id="PTHR48102:SF7">
    <property type="entry name" value="ATP-DEPENDENT CLP PROTEASE ATP-BINDING SUBUNIT CLPX-LIKE, MITOCHONDRIAL"/>
    <property type="match status" value="1"/>
</dbReference>
<dbReference type="PANTHER" id="PTHR48102">
    <property type="entry name" value="ATP-DEPENDENT CLP PROTEASE ATP-BINDING SUBUNIT CLPX-LIKE, MITOCHONDRIAL-RELATED"/>
    <property type="match status" value="1"/>
</dbReference>
<dbReference type="Pfam" id="PF07724">
    <property type="entry name" value="AAA_2"/>
    <property type="match status" value="1"/>
</dbReference>
<dbReference type="Pfam" id="PF10431">
    <property type="entry name" value="ClpB_D2-small"/>
    <property type="match status" value="1"/>
</dbReference>
<dbReference type="Pfam" id="PF06689">
    <property type="entry name" value="zf-C4_ClpX"/>
    <property type="match status" value="1"/>
</dbReference>
<dbReference type="SMART" id="SM00382">
    <property type="entry name" value="AAA"/>
    <property type="match status" value="1"/>
</dbReference>
<dbReference type="SMART" id="SM01086">
    <property type="entry name" value="ClpB_D2-small"/>
    <property type="match status" value="1"/>
</dbReference>
<dbReference type="SMART" id="SM00994">
    <property type="entry name" value="zf-C4_ClpX"/>
    <property type="match status" value="1"/>
</dbReference>
<dbReference type="SUPFAM" id="SSF57716">
    <property type="entry name" value="Glucocorticoid receptor-like (DNA-binding domain)"/>
    <property type="match status" value="1"/>
</dbReference>
<dbReference type="SUPFAM" id="SSF52540">
    <property type="entry name" value="P-loop containing nucleoside triphosphate hydrolases"/>
    <property type="match status" value="1"/>
</dbReference>
<dbReference type="PROSITE" id="PS51902">
    <property type="entry name" value="CLPX_ZB"/>
    <property type="match status" value="1"/>
</dbReference>
<reference key="1">
    <citation type="journal article" date="1998" name="Nature">
        <title>The genome sequence of Rickettsia prowazekii and the origin of mitochondria.</title>
        <authorList>
            <person name="Andersson S.G.E."/>
            <person name="Zomorodipour A."/>
            <person name="Andersson J.O."/>
            <person name="Sicheritz-Ponten T."/>
            <person name="Alsmark U.C.M."/>
            <person name="Podowski R.M."/>
            <person name="Naeslund A.K."/>
            <person name="Eriksson A.-S."/>
            <person name="Winkler H.H."/>
            <person name="Kurland C.G."/>
        </authorList>
    </citation>
    <scope>NUCLEOTIDE SEQUENCE [LARGE SCALE GENOMIC DNA]</scope>
    <source>
        <strain>Madrid E</strain>
    </source>
</reference>